<reference key="1">
    <citation type="journal article" date="1986" name="Proc. Natl. Acad. Sci. U.S.A.">
        <title>Complete cDNA sequence of human preceruloplasmin.</title>
        <authorList>
            <person name="Koschinsky M.L."/>
            <person name="Funk W.D."/>
            <person name="van Oost B.A."/>
            <person name="McGillivray R.T.A."/>
        </authorList>
    </citation>
    <scope>NUCLEOTIDE SEQUENCE [MRNA]</scope>
    <scope>VARIANT ASP-544</scope>
</reference>
<reference key="2">
    <citation type="submission" date="2005-12" db="EMBL/GenBank/DDBJ databases">
        <authorList>
            <consortium name="NHLBI resequencing and genotyping service (RS&amp;G)"/>
        </authorList>
    </citation>
    <scope>NUCLEOTIDE SEQUENCE [GENOMIC DNA]</scope>
    <scope>VARIANT ASP-544</scope>
</reference>
<reference key="3">
    <citation type="journal article" date="1995" name="Biochem. Biophys. Res. Commun.">
        <title>Fine structure of the human ceruloplasmin gene.</title>
        <authorList>
            <person name="Daimon M."/>
            <person name="Yamatani K."/>
            <person name="Igarashi M."/>
            <person name="Fukase N."/>
            <person name="Kawanami T."/>
            <person name="Kato T."/>
            <person name="Tominaga M."/>
            <person name="Sasaki H."/>
        </authorList>
    </citation>
    <scope>NUCLEOTIDE SEQUENCE [GENOMIC DNA] OF 1-1006</scope>
</reference>
<reference key="4">
    <citation type="journal article" date="1986" name="FEBS Lett.">
        <title>Isolation of a human ceruloplasmin cDNA clone that includes the N-terminal leader sequence.</title>
        <authorList>
            <person name="Mercer J.F.B."/>
            <person name="Grimes A."/>
        </authorList>
    </citation>
    <scope>NUCLEOTIDE SEQUENCE [MRNA] OF 1-40; 549-599; 784-829 AND 919-952</scope>
</reference>
<reference key="5">
    <citation type="submission" date="1999-03" db="EMBL/GenBank/DDBJ databases">
        <title>Cloning and functional analysis of the human ceruloplasmin gene minimal promoter.</title>
        <authorList>
            <person name="Bingle C.D."/>
        </authorList>
    </citation>
    <scope>NUCLEOTIDE SEQUENCE [GENOMIC DNA] OF 1-22</scope>
</reference>
<reference key="6">
    <citation type="journal article" date="1986" name="Proc. Natl. Acad. Sci. U.S.A.">
        <title>Characterization, mapping, and expression of the human ceruloplasmin gene.</title>
        <authorList>
            <person name="Yang F."/>
            <person name="Naylor S.L."/>
            <person name="Lum J.B."/>
            <person name="Cutshaw S."/>
            <person name="McCombs J.L."/>
            <person name="Naberhaus K.H."/>
            <person name="McGill J.R."/>
            <person name="Adrian G.S."/>
            <person name="Moore C.M."/>
            <person name="Barnett D.R."/>
            <person name="Bowman B.H."/>
        </authorList>
    </citation>
    <scope>NUCLEOTIDE SEQUENCE [MRNA] OF 218-1065</scope>
    <scope>VARIANT ASP-544</scope>
</reference>
<reference key="7">
    <citation type="journal article" date="1984" name="Proc. Natl. Acad. Sci. U.S.A.">
        <title>Single-chain structure of human ceruloplasmin: the complete amino acid sequence of the whole molecule.</title>
        <authorList>
            <person name="Takahashi N."/>
            <person name="Ortel T.L."/>
            <person name="Putnam F.W."/>
        </authorList>
    </citation>
    <scope>PROTEIN SEQUENCE OF 20-1065</scope>
</reference>
<reference key="8">
    <citation type="journal article" date="1983" name="Proc. Natl. Acad. Sci. U.S.A.">
        <title>Internal triplication in the structure of human ceruloplasmin.</title>
        <authorList>
            <person name="Takahashi N."/>
            <person name="Bauman R.A."/>
            <person name="Ortel T.L."/>
            <person name="Dwulet F.E."/>
            <person name="Wang C.-C."/>
            <person name="Putnam F.W."/>
        </authorList>
    </citation>
    <scope>PROTEIN SEQUENCE OF 158-333; 518-724 AND 858-1065</scope>
</reference>
<reference key="9">
    <citation type="journal article" date="1981" name="Proc. Natl. Acad. Sci. U.S.A.">
        <title>Complete amino acid sequence of a 50,000-dalton fragment of human ceruloplasmin.</title>
        <authorList>
            <person name="Dwulet F.E."/>
            <person name="Putnam F.W."/>
        </authorList>
    </citation>
    <scope>PROTEIN SEQUENCE OF 501-905</scope>
</reference>
<reference key="10">
    <citation type="journal article" date="1980" name="J. Biol. Chem.">
        <title>Primary structure of a histidine-rich proteolytic fragment of human ceruloplasmin. I. Amino acid sequence of the cyanogen bromide peptides.</title>
        <authorList>
            <person name="Kingston I.B."/>
            <person name="Kingston B.L."/>
            <person name="Putnam F.W."/>
        </authorList>
    </citation>
    <scope>PROTEIN SEQUENCE OF 907-1065</scope>
</reference>
<reference key="11">
    <citation type="journal article" date="1980" name="J. Biol. Chem.">
        <title>Primary structure of a histidine-rich proteolytic fragment of human ceruloplasmin. II. Amino acid sequence of the tryptic peptides.</title>
        <authorList>
            <person name="Kingston I.B."/>
            <person name="Kingston B.L."/>
            <person name="Putnam F.W."/>
        </authorList>
    </citation>
    <scope>PROTEIN SEQUENCE OF 907-1065</scope>
</reference>
<reference key="12">
    <citation type="journal article" date="1990" name="J. Biol. Chem.">
        <title>Human ceruloplasmin. Tissue-specific expression of transcripts produced by alternative splicing.</title>
        <authorList>
            <person name="Yang F.M."/>
            <person name="Friedrichs W.E."/>
            <person name="Cupples R.L."/>
            <person name="Banifacio M.J."/>
            <person name="Sanford J.A."/>
            <person name="Horton W.A."/>
            <person name="Bowman B.H."/>
        </authorList>
    </citation>
    <scope>NUCLEOTIDE SEQUENCE [GENOMIC DNA] OF 1007-1061</scope>
</reference>
<reference key="13">
    <citation type="journal article" date="1966" name="J. Biol. Chem.">
        <title>The possible significance of the ferrous oxidase activity of ceruloplasmin in normal human serum.</title>
        <authorList>
            <person name="Osaki S."/>
            <person name="Johnson D.A."/>
            <person name="Frieden E."/>
        </authorList>
    </citation>
    <scope>FUNCTION</scope>
    <scope>CATALYTIC ACTIVITY</scope>
</reference>
<reference key="14">
    <citation type="journal article" date="1972" name="Biochem. J.">
        <title>A method for obtaining linear reciprocal plots with caeruloplasmin and its application in a study of the kinetic parameters of caeruloplasmin substrates.</title>
        <authorList>
            <person name="Young S.N."/>
            <person name="Curzon G."/>
        </authorList>
    </citation>
    <scope>FUNCTION</scope>
</reference>
<reference key="15">
    <citation type="journal article" date="1999" name="Biochemistry">
        <title>Ceruloplasmin has a distinct active site for the catalyzing glutathione-dependent reduction of alkyl hydroperoxide.</title>
        <authorList>
            <person name="Cha M.K."/>
            <person name="Kim I.H."/>
        </authorList>
    </citation>
    <scope>FUNCTION</scope>
    <scope>CATALYTIC ACTIVITY</scope>
    <scope>BIOPHYSICOCHEMICAL PROPERTIES</scope>
    <scope>ACTIVE SITE</scope>
</reference>
<reference key="16">
    <citation type="journal article" date="1999" name="FEBS Lett.">
        <title>Glutathione peroxidase-like activity of caeruloplasmin as an important lung antioxidant.</title>
        <authorList>
            <person name="Park Y.S."/>
            <person name="Suzuki K."/>
            <person name="Taniguchi N."/>
            <person name="Gutteridge J.M."/>
        </authorList>
    </citation>
    <scope>FUNCTION</scope>
    <scope>CATALYTIC ACTIVITY</scope>
</reference>
<reference key="17">
    <citation type="journal article" date="2002" name="Annu. Rev. Nutr.">
        <title>Ceruloplasmin metabolism and function.</title>
        <authorList>
            <person name="Hellman N.E."/>
            <person name="Gitlin J.D."/>
        </authorList>
    </citation>
    <scope>REVIEW</scope>
</reference>
<reference key="18">
    <citation type="journal article" date="2003" name="FEBS Lett.">
        <title>Cuprous oxidase activity of yeast Fet3p and human ceruloplasmin: implication for function.</title>
        <authorList>
            <person name="Stoj C."/>
            <person name="Kosman D.J."/>
        </authorList>
    </citation>
    <scope>FUNCTION</scope>
    <scope>CATALYTIC ACTIVITY</scope>
    <scope>BIOPHYSICOCHEMICAL PROPERTIES</scope>
</reference>
<reference key="19">
    <citation type="journal article" date="2004" name="Mol. Cell. Proteomics">
        <title>A proteomic analysis of human bile.</title>
        <authorList>
            <person name="Kristiansen T.Z."/>
            <person name="Bunkenborg J."/>
            <person name="Gronborg M."/>
            <person name="Molina H."/>
            <person name="Thuluvath P.J."/>
            <person name="Argani P."/>
            <person name="Goggins M.G."/>
            <person name="Maitra A."/>
            <person name="Pandey A."/>
        </authorList>
    </citation>
    <scope>GLYCOSYLATION [LARGE SCALE ANALYSIS] AT ASN-138</scope>
    <source>
        <tissue>Bile</tissue>
    </source>
</reference>
<reference key="20">
    <citation type="journal article" date="2004" name="Proteomics">
        <title>Screening for N-glycosylated proteins by liquid chromatography mass spectrometry.</title>
        <authorList>
            <person name="Bunkenborg J."/>
            <person name="Pilch B.J."/>
            <person name="Podtelejnikov A.V."/>
            <person name="Wisniewski J.R."/>
        </authorList>
    </citation>
    <scope>GLYCOSYLATION [LARGE SCALE ANALYSIS] AT ASN-138; ASN-397 AND ASN-762</scope>
    <source>
        <tissue>Plasma</tissue>
    </source>
</reference>
<reference key="21">
    <citation type="journal article" date="2005" name="J. Proteome Res.">
        <title>Human plasma N-glycoproteome analysis by immunoaffinity subtraction, hydrazide chemistry, and mass spectrometry.</title>
        <authorList>
            <person name="Liu T."/>
            <person name="Qian W.-J."/>
            <person name="Gritsenko M.A."/>
            <person name="Camp D.G. II"/>
            <person name="Monroe M.E."/>
            <person name="Moore R.J."/>
            <person name="Smith R.D."/>
        </authorList>
    </citation>
    <scope>GLYCOSYLATION [LARGE SCALE ANALYSIS] AT ASN-138; ASN-358; ASN-397; ASN-588; ASN-762 AND ASN-926</scope>
    <source>
        <tissue>Plasma</tissue>
    </source>
</reference>
<reference key="22">
    <citation type="journal article" date="2006" name="Nat. Chem. Biol.">
        <title>Ceruloplasmin is a NO oxidase and nitrite synthase that determines endocrine NO homeostasis.</title>
        <authorList>
            <person name="Shiva S."/>
            <person name="Wang X."/>
            <person name="Ringwood L.A."/>
            <person name="Xu X."/>
            <person name="Yuditskaya S."/>
            <person name="Annavajjhala V."/>
            <person name="Miyajima H."/>
            <person name="Hogg N."/>
            <person name="Harris Z.L."/>
            <person name="Gladwin M.T."/>
        </authorList>
    </citation>
    <scope>FUNCTION</scope>
</reference>
<reference key="23">
    <citation type="journal article" date="2009" name="J. Proteome Res.">
        <title>Glycoproteomics analysis of human liver tissue by combination of multiple enzyme digestion and hydrazide chemistry.</title>
        <authorList>
            <person name="Chen R."/>
            <person name="Jiang X."/>
            <person name="Sun D."/>
            <person name="Han G."/>
            <person name="Wang F."/>
            <person name="Ye M."/>
            <person name="Wang L."/>
            <person name="Zou H."/>
        </authorList>
    </citation>
    <scope>GLYCOSYLATION [LARGE SCALE ANALYSIS] AT ASN-138; ASN-358; ASN-397 AND ASN-762</scope>
    <source>
        <tissue>Liver</tissue>
    </source>
</reference>
<reference key="24">
    <citation type="journal article" date="2009" name="Mol. Cell. Proteomics">
        <title>A strategy for precise and large scale identification of core fucosylated glycoproteins.</title>
        <authorList>
            <person name="Jia W."/>
            <person name="Lu Z."/>
            <person name="Fu Y."/>
            <person name="Wang H.P."/>
            <person name="Wang L.H."/>
            <person name="Chi H."/>
            <person name="Yuan Z.F."/>
            <person name="Zheng Z.B."/>
            <person name="Song L.N."/>
            <person name="Han H.H."/>
            <person name="Liang Y.M."/>
            <person name="Wang J.L."/>
            <person name="Cai Y."/>
            <person name="Zhang Y.K."/>
            <person name="Deng Y.L."/>
            <person name="Ying W.T."/>
            <person name="He S.M."/>
            <person name="Qian X.H."/>
        </authorList>
    </citation>
    <scope>GLYCOSYLATION AT ASN-138; ASN-358; ASN-397 AND ASN-762</scope>
</reference>
<reference key="25">
    <citation type="journal article" date="2009" name="Nat. Methods">
        <title>Enrichment of glycopeptides for glycan structure and attachment site identification.</title>
        <authorList>
            <person name="Nilsson J."/>
            <person name="Rueetschi U."/>
            <person name="Halim A."/>
            <person name="Hesse C."/>
            <person name="Carlsohn E."/>
            <person name="Brinkmalm G."/>
            <person name="Larson G."/>
        </authorList>
    </citation>
    <scope>GLYCOSYLATION [LARGE SCALE ANALYSIS] AT ASN-138; ASN-358 AND ASN-397</scope>
    <scope>STRUCTURE OF CARBOHYDRATES</scope>
    <source>
        <tissue>Cerebrospinal fluid</tissue>
    </source>
</reference>
<reference key="26">
    <citation type="journal article" date="2014" name="J. Proteomics">
        <title>An enzyme assisted RP-RPLC approach for in-depth analysis of human liver phosphoproteome.</title>
        <authorList>
            <person name="Bian Y."/>
            <person name="Song C."/>
            <person name="Cheng K."/>
            <person name="Dong M."/>
            <person name="Wang F."/>
            <person name="Huang J."/>
            <person name="Sun D."/>
            <person name="Wang L."/>
            <person name="Ye M."/>
            <person name="Zou H."/>
        </authorList>
    </citation>
    <scope>IDENTIFICATION BY MASS SPECTROMETRY [LARGE SCALE ANALYSIS]</scope>
    <source>
        <tissue>Liver</tissue>
    </source>
</reference>
<reference key="27">
    <citation type="journal article" date="2015" name="Cell">
        <title>A single kinase generates the majority of the secreted phosphoproteome.</title>
        <authorList>
            <person name="Tagliabracci V.S."/>
            <person name="Wiley S.E."/>
            <person name="Guo X."/>
            <person name="Kinch L.N."/>
            <person name="Durrant E."/>
            <person name="Wen J."/>
            <person name="Xiao J."/>
            <person name="Cui J."/>
            <person name="Nguyen K.B."/>
            <person name="Engel J.L."/>
            <person name="Coon J.J."/>
            <person name="Grishin N."/>
            <person name="Pinna L.A."/>
            <person name="Pagliarini D.J."/>
            <person name="Dixon J.E."/>
        </authorList>
    </citation>
    <scope>PHOSPHORYLATION AT SER-722</scope>
</reference>
<reference key="28">
    <citation type="journal article" date="2018" name="EMBO Mol. Med.">
        <title>Ceruloplasmin replacement therapy ameliorates neurological symptoms in a preclinical model of aceruloplasminemia.</title>
        <authorList>
            <person name="Zanardi A."/>
            <person name="Conti A."/>
            <person name="Cremonesi M."/>
            <person name="D'Adamo P."/>
            <person name="Gilberti E."/>
            <person name="Apostoli P."/>
            <person name="Cannistraci C.V."/>
            <person name="Piperno A."/>
            <person name="David S."/>
            <person name="Alessio M."/>
        </authorList>
    </citation>
    <scope>CATALYTIC ACTIVITY</scope>
</reference>
<reference evidence="31" key="29">
    <citation type="journal article" date="1996" name="J. Biol. Inorg. Chem.">
        <title>The X-ray structure of human serum ceruloplasmin at 3.1 A: nature of the copper centres.</title>
        <authorList>
            <person name="Zaitseva I."/>
            <person name="Zaitsev V."/>
            <person name="Card G."/>
            <person name="Moshkov K."/>
            <person name="Bax B."/>
            <person name="Ralph A."/>
            <person name="Lindley P."/>
        </authorList>
    </citation>
    <scope>X-RAY CRYSTALLOGRAPHY (3.00 ANGSTROMS) OF 20-1065 IN COMPLEX WITH CU(2+)</scope>
    <scope>GLYCOSYLATION AT ASN-138 AND ASN-762</scope>
    <scope>DOMAIN</scope>
    <scope>DISULFIDE BOND</scope>
</reference>
<reference evidence="32" key="30">
    <citation type="journal article" date="2007" name="Acta Crystallogr. D">
        <title>Ceruloplasmin revisited: structural and functional roles of various metal cation-binding sites.</title>
        <authorList>
            <person name="Bento I."/>
            <person name="Peixoto C."/>
            <person name="Zaitsev V.N."/>
            <person name="Lindley P.F."/>
        </authorList>
    </citation>
    <scope>X-RAY CRYSTALLOGRAPHY (2.80 ANGSTROMS) IN COMPLEX WITH O2; CA(2+); CU(2+) AND NA(+)</scope>
    <scope>GLYCOSYLATION AT ASN-138 AND ASN-397</scope>
    <scope>DISULFIDE BOND</scope>
</reference>
<reference evidence="33 34" key="31">
    <citation type="journal article" date="2013" name="PLoS ONE">
        <title>Ceruloplasmin: macromolecular assemblies with iron-containing acute phase proteins.</title>
        <authorList>
            <person name="Samygina V.R."/>
            <person name="Sokolov A.V."/>
            <person name="Bourenkov G."/>
            <person name="Petoukhov M.V."/>
            <person name="Pulina M.O."/>
            <person name="Zakharova E.T."/>
            <person name="Vasilyev V.B."/>
            <person name="Bartunik H."/>
            <person name="Svergun D.I."/>
        </authorList>
    </citation>
    <scope>X-RAY CRYSTALLOGRAPHY (2.60 ANGSTROMS) IN COMPLEX WITH MPO; CA(2+); CU(2+) AND NA(+)</scope>
    <scope>GLYCOSYLATION AT ASN-138 AND ASN-397</scope>
    <scope>INTERACTION WITH MPO AND LTF</scope>
</reference>
<reference key="32">
    <citation type="journal article" date="1995" name="Proc. Natl. Acad. Sci. U.S.A.">
        <title>Aceruloplasminemia: molecular characterization of this disorder of iron metabolism.</title>
        <authorList>
            <person name="Harris Z.L."/>
            <person name="Takahashi Y."/>
            <person name="Miyajima H."/>
            <person name="Serizawa M."/>
            <person name="MacGillivray R.T."/>
            <person name="Gitlin J.D."/>
        </authorList>
    </citation>
    <scope>INVOLVEMENT IN ACEP</scope>
</reference>
<reference key="33">
    <citation type="journal article" date="2004" name="Neurology">
        <title>Ceruloplasmin gene variations and substantia nigra hyperechogenicity in Parkinson disease.</title>
        <authorList>
            <person name="Hochstrasser H."/>
            <person name="Bauer P."/>
            <person name="Walter U."/>
            <person name="Behnke S."/>
            <person name="Spiegel J."/>
            <person name="Csoti I."/>
            <person name="Zeiler B."/>
            <person name="Bornemann A."/>
            <person name="Pahnke J."/>
            <person name="Becker G."/>
            <person name="Riess O."/>
            <person name="Berg D."/>
        </authorList>
    </citation>
    <scope>VARIANTS THR-63; LEU-477; ILE-551; HIS-793 AND ARG-841</scope>
</reference>
<reference key="34">
    <citation type="journal article" date="2005" name="FASEB J.">
        <title>Functional relevance of ceruloplasmin mutations in Parkinson's disease.</title>
        <authorList>
            <person name="Hochstrasser H."/>
            <person name="Tomiuk J."/>
            <person name="Walter U."/>
            <person name="Behnke S."/>
            <person name="Spiegel J."/>
            <person name="Krueger R."/>
            <person name="Becker G."/>
            <person name="Riess O."/>
            <person name="Berg D."/>
        </authorList>
    </citation>
    <scope>CHARACTERIZATION OF VARIANTS THR-63 AND HIS-793</scope>
    <scope>FUNCTION</scope>
    <scope>CATALYTIC ACTIVITY</scope>
    <scope>SUBCELLULAR LOCATION</scope>
</reference>
<keyword id="KW-0002">3D-structure</keyword>
<keyword id="KW-0903">Direct protein sequencing</keyword>
<keyword id="KW-1015">Disulfide bond</keyword>
<keyword id="KW-0325">Glycoprotein</keyword>
<keyword id="KW-0479">Metal-binding</keyword>
<keyword id="KW-0560">Oxidoreductase</keyword>
<keyword id="KW-0597">Phosphoprotein</keyword>
<keyword id="KW-1267">Proteomics identification</keyword>
<keyword id="KW-1185">Reference proteome</keyword>
<keyword id="KW-0677">Repeat</keyword>
<keyword id="KW-0964">Secreted</keyword>
<keyword id="KW-0732">Signal</keyword>
<comment type="function">
    <text evidence="1 2 4 8 10 19 20">Multifunctional blue, copper-binding (6-7 atoms per molecule) glycoprotein. It has ferroxidase activity oxidizing Fe(2+) to Fe(3+) without releasing radical oxygen species. It is involved in iron transport across the cell membrane (PubMed:16150804). Copper ions provide a large number of enzymatic activites. Oxidizes highly toxic ferrous ions to the ferric state for further incorporation onto apo-transferrins, catalyzes Cu(+) oxidation and promotes the oxidation of biogenic amines such as norepinephrin and serotonin (PubMed:14623105, PubMed:4643313, PubMed:5912351). Provides Cu(2+) ions for the ascorbate-mediated deaminase degradation of the heparan sulfate chains of GPC1 (By similarity). Has glutathione peroxidase-like activity, can remove both hydrogen peroxide and lipid hydroperoxide in the presence of thiols (PubMed:10481051). Also shows NO-oxidase and NO2 synthase activities that determine endocrine NO homeostasis (PubMed:16906150).</text>
</comment>
<comment type="catalytic activity">
    <reaction evidence="2 8 18 20">
        <text>4 Fe(2+) + O2 + 4 H(+) = 4 Fe(3+) + 2 H2O</text>
        <dbReference type="Rhea" id="RHEA:11148"/>
        <dbReference type="ChEBI" id="CHEBI:15377"/>
        <dbReference type="ChEBI" id="CHEBI:15378"/>
        <dbReference type="ChEBI" id="CHEBI:15379"/>
        <dbReference type="ChEBI" id="CHEBI:29033"/>
        <dbReference type="ChEBI" id="CHEBI:29034"/>
        <dbReference type="EC" id="1.16.3.1"/>
    </reaction>
    <physiologicalReaction direction="right-to-left" evidence="8 18">
        <dbReference type="Rhea" id="RHEA:11150"/>
    </physiologicalReaction>
</comment>
<comment type="catalytic activity">
    <reaction evidence="4">
        <text>4 Cu(+) + O2 + 4 H(+) = 4 Cu(2+) + 2 H2O</text>
        <dbReference type="Rhea" id="RHEA:30083"/>
        <dbReference type="ChEBI" id="CHEBI:15377"/>
        <dbReference type="ChEBI" id="CHEBI:15378"/>
        <dbReference type="ChEBI" id="CHEBI:15379"/>
        <dbReference type="ChEBI" id="CHEBI:29036"/>
        <dbReference type="ChEBI" id="CHEBI:49552"/>
        <dbReference type="EC" id="1.16.3.4"/>
    </reaction>
    <physiologicalReaction direction="left-to-right" evidence="28">
        <dbReference type="Rhea" id="RHEA:30084"/>
    </physiologicalReaction>
</comment>
<comment type="catalytic activity">
    <reaction evidence="2 3">
        <text>a hydroperoxide + 2 glutathione = an alcohol + glutathione disulfide + H2O</text>
        <dbReference type="Rhea" id="RHEA:62632"/>
        <dbReference type="ChEBI" id="CHEBI:15377"/>
        <dbReference type="ChEBI" id="CHEBI:30879"/>
        <dbReference type="ChEBI" id="CHEBI:35924"/>
        <dbReference type="ChEBI" id="CHEBI:57925"/>
        <dbReference type="ChEBI" id="CHEBI:58297"/>
        <dbReference type="EC" id="1.11.1.27"/>
    </reaction>
    <physiologicalReaction direction="left-to-right" evidence="26">
        <dbReference type="Rhea" id="RHEA:62633"/>
    </physiologicalReaction>
</comment>
<comment type="catalytic activity">
    <reaction evidence="18">
        <text>4 nitric oxide + O2 + 2 H2O = 4 nitrite + 4 H(+)</text>
        <dbReference type="Rhea" id="RHEA:78539"/>
        <dbReference type="ChEBI" id="CHEBI:15377"/>
        <dbReference type="ChEBI" id="CHEBI:15378"/>
        <dbReference type="ChEBI" id="CHEBI:15379"/>
        <dbReference type="ChEBI" id="CHEBI:16301"/>
        <dbReference type="ChEBI" id="CHEBI:16480"/>
    </reaction>
    <physiologicalReaction direction="left-to-right" evidence="29">
        <dbReference type="Rhea" id="RHEA:78540"/>
    </physiologicalReaction>
</comment>
<comment type="catalytic activity">
    <reaction evidence="2 3">
        <text>2 glutathione + H2O2 = glutathione disulfide + 2 H2O</text>
        <dbReference type="Rhea" id="RHEA:16833"/>
        <dbReference type="ChEBI" id="CHEBI:15377"/>
        <dbReference type="ChEBI" id="CHEBI:16240"/>
        <dbReference type="ChEBI" id="CHEBI:57925"/>
        <dbReference type="ChEBI" id="CHEBI:58297"/>
        <dbReference type="EC" id="1.11.1.9"/>
    </reaction>
    <physiologicalReaction direction="left-to-right" evidence="26">
        <dbReference type="Rhea" id="RHEA:16834"/>
    </physiologicalReaction>
</comment>
<comment type="cofactor">
    <cofactor evidence="11 15 23">
        <name>Cu(2+)</name>
        <dbReference type="ChEBI" id="CHEBI:29036"/>
    </cofactor>
    <text evidence="11 15 23">Binds 6 Cu(2+) cations per monomer.</text>
</comment>
<comment type="biophysicochemical properties">
    <kinetics>
        <KM evidence="4">36.8 uM for Cu(+)</KM>
        <KM evidence="4">8.3 uM for Fe(2+)</KM>
        <KM evidence="3">1.57 mM for glutathione</KM>
        <KM evidence="3">0.63 mM for tert-butyl hydroperoxide</KM>
        <KM evidence="3">0.87 mM for glutathione</KM>
        <Vmax evidence="3">156.0 nmol/min/mg enzyme (in presence of 5 mM tert-butyl hydroperoxide)</Vmax>
        <Vmax evidence="3">49.0 nmol/min/mg enzyme (in presence of 5 mM H2O2)</Vmax>
        <text evidence="4">kcat is 22.5 min(-1) and 30.3 min(-1) with Cu(+) and Fe(2+) as substrates, respectively.</text>
    </kinetics>
</comment>
<comment type="subunit">
    <text evidence="15">Found in a complex with MPO and LTF; interacts directly with MPO and LTF, which allows Fe(3+) incorporation into LTF, activation of CP ferroxidase activity and protection of CP antioxidant properties by MPO.</text>
</comment>
<comment type="subcellular location">
    <subcellularLocation>
        <location evidence="8">Secreted</location>
    </subcellularLocation>
    <text evidence="1">Colocalizes with GCP1 in secretory intracellular compartments.</text>
</comment>
<comment type="tissue specificity">
    <text evidence="27">Expressed by the liver and secreted in plasma.</text>
</comment>
<comment type="disease" evidence="22">
    <disease id="DI-00017">
        <name>Aceruloplasminemia</name>
        <acronym>ACEP</acronym>
        <description>An autosomal recessive disorder of iron metabolism characterized by iron accumulation in the brain as well as visceral organs. Clinical features consist of the triad of retinal degeneration, diabetes mellitus and neurological disturbances.</description>
        <dbReference type="MIM" id="604290"/>
    </disease>
    <text>The disease is caused by variants affecting the gene represented in this entry.</text>
</comment>
<comment type="similarity">
    <text evidence="24">Belongs to the multicopper oxidase family.</text>
</comment>
<comment type="online information" name="Wikipedia">
    <link uri="https://en.wikipedia.org/wiki/Ceruloplasmin"/>
    <text>Ceruloplasmin entry</text>
</comment>
<dbReference type="EC" id="1.16.3.4" evidence="4"/>
<dbReference type="EC" id="1.16.3.1" evidence="2 8"/>
<dbReference type="EC" id="1.11.1.9" evidence="2 3"/>
<dbReference type="EC" id="1.11.1.27" evidence="2 3"/>
<dbReference type="EMBL" id="M13699">
    <property type="protein sequence ID" value="AAA51976.1"/>
    <property type="molecule type" value="mRNA"/>
</dbReference>
<dbReference type="EMBL" id="DQ314867">
    <property type="protein sequence ID" value="ABC40726.1"/>
    <property type="molecule type" value="Genomic_DNA"/>
</dbReference>
<dbReference type="EMBL" id="D45045">
    <property type="protein sequence ID" value="BAA08085.1"/>
    <property type="molecule type" value="Genomic_DNA"/>
</dbReference>
<dbReference type="EMBL" id="D00025">
    <property type="protein sequence ID" value="BAA00019.1"/>
    <property type="molecule type" value="mRNA"/>
</dbReference>
<dbReference type="EMBL" id="X04135">
    <property type="protein sequence ID" value="CAA27752.1"/>
    <property type="molecule type" value="mRNA"/>
</dbReference>
<dbReference type="EMBL" id="X04136">
    <property type="protein sequence ID" value="CAA27753.1"/>
    <property type="molecule type" value="mRNA"/>
</dbReference>
<dbReference type="EMBL" id="X04137">
    <property type="protein sequence ID" value="CAA27754.1"/>
    <property type="molecule type" value="mRNA"/>
</dbReference>
<dbReference type="EMBL" id="X04138">
    <property type="protein sequence ID" value="CAA27755.1"/>
    <property type="molecule type" value="mRNA"/>
</dbReference>
<dbReference type="EMBL" id="AF132978">
    <property type="protein sequence ID" value="AAF02483.1"/>
    <property type="molecule type" value="Genomic_DNA"/>
</dbReference>
<dbReference type="EMBL" id="M13536">
    <property type="protein sequence ID" value="AAA51975.1"/>
    <property type="molecule type" value="mRNA"/>
</dbReference>
<dbReference type="EMBL" id="J05506">
    <property type="status" value="NOT_ANNOTATED_CDS"/>
    <property type="molecule type" value="Genomic_DNA"/>
</dbReference>
<dbReference type="CCDS" id="CCDS3141.1"/>
<dbReference type="PIR" id="A25443">
    <property type="entry name" value="KUHU"/>
</dbReference>
<dbReference type="RefSeq" id="NP_000087.2">
    <property type="nucleotide sequence ID" value="NM_000096.4"/>
</dbReference>
<dbReference type="PDB" id="1KCW">
    <property type="method" value="X-ray"/>
    <property type="resolution" value="3.00 A"/>
    <property type="chains" value="A=20-1065"/>
</dbReference>
<dbReference type="PDB" id="2J5W">
    <property type="method" value="X-ray"/>
    <property type="resolution" value="2.80 A"/>
    <property type="chains" value="A=1-1065"/>
</dbReference>
<dbReference type="PDB" id="4EJX">
    <property type="method" value="X-ray"/>
    <property type="resolution" value="4.69 A"/>
    <property type="chains" value="A=1-1065"/>
</dbReference>
<dbReference type="PDB" id="4ENZ">
    <property type="method" value="X-ray"/>
    <property type="resolution" value="2.60 A"/>
    <property type="chains" value="A=1-1065"/>
</dbReference>
<dbReference type="PDBsum" id="1KCW"/>
<dbReference type="PDBsum" id="2J5W"/>
<dbReference type="PDBsum" id="4EJX"/>
<dbReference type="PDBsum" id="4ENZ"/>
<dbReference type="PCDDB" id="P00450"/>
<dbReference type="SASBDB" id="P00450"/>
<dbReference type="SMR" id="P00450"/>
<dbReference type="BioGRID" id="107748">
    <property type="interactions" value="67"/>
</dbReference>
<dbReference type="CORUM" id="P00450"/>
<dbReference type="FunCoup" id="P00450">
    <property type="interactions" value="262"/>
</dbReference>
<dbReference type="IntAct" id="P00450">
    <property type="interactions" value="37"/>
</dbReference>
<dbReference type="MINT" id="P00450"/>
<dbReference type="STRING" id="9606.ENSP00000264613"/>
<dbReference type="DrugBank" id="DB01373">
    <property type="generic name" value="Calcium"/>
</dbReference>
<dbReference type="DrugBank" id="DB09130">
    <property type="generic name" value="Copper"/>
</dbReference>
<dbReference type="DrugBank" id="DB11134">
    <property type="generic name" value="Cupric oxide"/>
</dbReference>
<dbReference type="DrugBank" id="DB06778">
    <property type="generic name" value="Cupric sulfate"/>
</dbReference>
<dbReference type="DrugBank" id="DB14490">
    <property type="generic name" value="Ferrous ascorbate"/>
</dbReference>
<dbReference type="DrugBank" id="DB14491">
    <property type="generic name" value="Ferrous fumarate"/>
</dbReference>
<dbReference type="DrugBank" id="DB14488">
    <property type="generic name" value="Ferrous gluconate"/>
</dbReference>
<dbReference type="DrugBank" id="DB14501">
    <property type="generic name" value="Ferrous glycine sulfate"/>
</dbReference>
<dbReference type="DrugBank" id="DB14489">
    <property type="generic name" value="Ferrous succinate"/>
</dbReference>
<dbReference type="DrugBank" id="DB13257">
    <property type="generic name" value="Ferrous sulfate anhydrous"/>
</dbReference>
<dbReference type="DrugBank" id="DB01592">
    <property type="generic name" value="Iron"/>
</dbReference>
<dbReference type="DrugBank" id="DB06757">
    <property type="generic name" value="Manganese cation"/>
</dbReference>
<dbReference type="DrugBank" id="DB12965">
    <property type="generic name" value="Silver"/>
</dbReference>
<dbReference type="DrugBank" id="DB01593">
    <property type="generic name" value="Zinc"/>
</dbReference>
<dbReference type="DrugBank" id="DB14487">
    <property type="generic name" value="Zinc acetate"/>
</dbReference>
<dbReference type="DrugBank" id="DB14533">
    <property type="generic name" value="Zinc chloride"/>
</dbReference>
<dbReference type="DrugBank" id="DB14548">
    <property type="generic name" value="Zinc sulfate, unspecified form"/>
</dbReference>
<dbReference type="TCDB" id="8.A.105.1.2">
    <property type="family name" value="the multi-copper-containing ferroxidase (mcfo) family"/>
</dbReference>
<dbReference type="CarbonylDB" id="P00450"/>
<dbReference type="GlyConnect" id="85">
    <property type="glycosylation" value="71 N-Linked glycans (5 sites), 1 O-Linked glycan (1 site)"/>
</dbReference>
<dbReference type="GlyCosmos" id="P00450">
    <property type="glycosylation" value="12 sites, 86 glycans"/>
</dbReference>
<dbReference type="GlyGen" id="P00450">
    <property type="glycosylation" value="15 sites, 225 N-linked glycans (6 sites), 3 O-linked glycans (6 sites)"/>
</dbReference>
<dbReference type="iPTMnet" id="P00450"/>
<dbReference type="PhosphoSitePlus" id="P00450"/>
<dbReference type="SwissPalm" id="P00450"/>
<dbReference type="BioMuta" id="CP"/>
<dbReference type="DMDM" id="116117"/>
<dbReference type="CPTAC" id="CPTAC-660"/>
<dbReference type="CPTAC" id="non-CPTAC-1093"/>
<dbReference type="CPTAC" id="non-CPTAC-1094"/>
<dbReference type="CPTAC" id="non-CPTAC-1095"/>
<dbReference type="jPOST" id="P00450"/>
<dbReference type="MassIVE" id="P00450"/>
<dbReference type="PaxDb" id="9606-ENSP00000264613"/>
<dbReference type="PeptideAtlas" id="P00450"/>
<dbReference type="PRIDE" id="P00450"/>
<dbReference type="ProteomicsDB" id="51251"/>
<dbReference type="Pumba" id="P00450"/>
<dbReference type="Antibodypedia" id="861">
    <property type="antibodies" value="383 antibodies from 36 providers"/>
</dbReference>
<dbReference type="DNASU" id="1356"/>
<dbReference type="Ensembl" id="ENST00000264613.11">
    <property type="protein sequence ID" value="ENSP00000264613.6"/>
    <property type="gene ID" value="ENSG00000047457.14"/>
</dbReference>
<dbReference type="GeneID" id="1356"/>
<dbReference type="KEGG" id="hsa:1356"/>
<dbReference type="MANE-Select" id="ENST00000264613.11">
    <property type="protein sequence ID" value="ENSP00000264613.6"/>
    <property type="RefSeq nucleotide sequence ID" value="NM_000096.4"/>
    <property type="RefSeq protein sequence ID" value="NP_000087.2"/>
</dbReference>
<dbReference type="UCSC" id="uc003ewy.6">
    <property type="organism name" value="human"/>
</dbReference>
<dbReference type="AGR" id="HGNC:2295"/>
<dbReference type="CTD" id="1356"/>
<dbReference type="DisGeNET" id="1356"/>
<dbReference type="GeneCards" id="CP"/>
<dbReference type="GeneReviews" id="CP"/>
<dbReference type="HGNC" id="HGNC:2295">
    <property type="gene designation" value="CP"/>
</dbReference>
<dbReference type="HPA" id="ENSG00000047457">
    <property type="expression patterns" value="Tissue enriched (liver)"/>
</dbReference>
<dbReference type="MalaCards" id="CP"/>
<dbReference type="MIM" id="117700">
    <property type="type" value="gene"/>
</dbReference>
<dbReference type="MIM" id="604290">
    <property type="type" value="phenotype"/>
</dbReference>
<dbReference type="neXtProt" id="NX_P00450"/>
<dbReference type="OpenTargets" id="ENSG00000047457"/>
<dbReference type="Orphanet" id="48818">
    <property type="disease" value="Aceruloplasminemia"/>
</dbReference>
<dbReference type="PharmGKB" id="PA26815"/>
<dbReference type="VEuPathDB" id="HostDB:ENSG00000047457"/>
<dbReference type="eggNOG" id="KOG1263">
    <property type="taxonomic scope" value="Eukaryota"/>
</dbReference>
<dbReference type="GeneTree" id="ENSGT00940000155866"/>
<dbReference type="InParanoid" id="P00450"/>
<dbReference type="OMA" id="TTDHYAG"/>
<dbReference type="OrthoDB" id="2121828at2759"/>
<dbReference type="PAN-GO" id="P00450">
    <property type="GO annotations" value="4 GO annotations based on evolutionary models"/>
</dbReference>
<dbReference type="PhylomeDB" id="P00450"/>
<dbReference type="TreeFam" id="TF329807"/>
<dbReference type="BioCyc" id="MetaCyc:HS00590-MONOMER"/>
<dbReference type="BRENDA" id="1.16.3.1">
    <property type="organism ID" value="2681"/>
</dbReference>
<dbReference type="PathwayCommons" id="P00450"/>
<dbReference type="Reactome" id="R-HSA-381426">
    <property type="pathway name" value="Regulation of Insulin-like Growth Factor (IGF) transport and uptake by Insulin-like Growth Factor Binding Proteins (IGFBPs)"/>
</dbReference>
<dbReference type="Reactome" id="R-HSA-425410">
    <property type="pathway name" value="Metal ion SLC transporters"/>
</dbReference>
<dbReference type="Reactome" id="R-HSA-5619049">
    <property type="pathway name" value="Defective SLC40A1 causes hemochromatosis 4 (HFE4) (macrophages)"/>
</dbReference>
<dbReference type="Reactome" id="R-HSA-5619060">
    <property type="pathway name" value="Defective CP causes aceruloplasminemia (ACERULOP)"/>
</dbReference>
<dbReference type="Reactome" id="R-HSA-8957275">
    <property type="pathway name" value="Post-translational protein phosphorylation"/>
</dbReference>
<dbReference type="Reactome" id="R-HSA-917937">
    <property type="pathway name" value="Iron uptake and transport"/>
</dbReference>
<dbReference type="SABIO-RK" id="P00450"/>
<dbReference type="SignaLink" id="P00450"/>
<dbReference type="SIGNOR" id="P00450"/>
<dbReference type="BioGRID-ORCS" id="1356">
    <property type="hits" value="9 hits in 1151 CRISPR screens"/>
</dbReference>
<dbReference type="CD-CODE" id="91857CE7">
    <property type="entry name" value="Nucleolus"/>
</dbReference>
<dbReference type="ChiTaRS" id="CP">
    <property type="organism name" value="human"/>
</dbReference>
<dbReference type="EvolutionaryTrace" id="P00450"/>
<dbReference type="GeneWiki" id="Ceruloplasmin"/>
<dbReference type="GenomeRNAi" id="1356"/>
<dbReference type="Pharos" id="P00450">
    <property type="development level" value="Tbio"/>
</dbReference>
<dbReference type="PRO" id="PR:P00450"/>
<dbReference type="Proteomes" id="UP000005640">
    <property type="component" value="Chromosome 3"/>
</dbReference>
<dbReference type="RNAct" id="P00450">
    <property type="molecule type" value="protein"/>
</dbReference>
<dbReference type="Bgee" id="ENSG00000047457">
    <property type="expression patterns" value="Expressed in right lobe of liver and 156 other cell types or tissues"/>
</dbReference>
<dbReference type="ExpressionAtlas" id="P00450">
    <property type="expression patterns" value="baseline and differential"/>
</dbReference>
<dbReference type="GO" id="GO:0072562">
    <property type="term" value="C:blood microparticle"/>
    <property type="evidence" value="ECO:0007005"/>
    <property type="project" value="UniProtKB"/>
</dbReference>
<dbReference type="GO" id="GO:0005788">
    <property type="term" value="C:endoplasmic reticulum lumen"/>
    <property type="evidence" value="ECO:0000304"/>
    <property type="project" value="Reactome"/>
</dbReference>
<dbReference type="GO" id="GO:0070062">
    <property type="term" value="C:extracellular exosome"/>
    <property type="evidence" value="ECO:0007005"/>
    <property type="project" value="UniProtKB"/>
</dbReference>
<dbReference type="GO" id="GO:0005576">
    <property type="term" value="C:extracellular region"/>
    <property type="evidence" value="ECO:0000304"/>
    <property type="project" value="Reactome"/>
</dbReference>
<dbReference type="GO" id="GO:0005615">
    <property type="term" value="C:extracellular space"/>
    <property type="evidence" value="ECO:0000314"/>
    <property type="project" value="UniProtKB"/>
</dbReference>
<dbReference type="GO" id="GO:0005765">
    <property type="term" value="C:lysosomal membrane"/>
    <property type="evidence" value="ECO:0007005"/>
    <property type="project" value="UniProtKB"/>
</dbReference>
<dbReference type="GO" id="GO:0005886">
    <property type="term" value="C:plasma membrane"/>
    <property type="evidence" value="ECO:0000318"/>
    <property type="project" value="GO_Central"/>
</dbReference>
<dbReference type="GO" id="GO:0005507">
    <property type="term" value="F:copper ion binding"/>
    <property type="evidence" value="ECO:0007669"/>
    <property type="project" value="InterPro"/>
</dbReference>
<dbReference type="GO" id="GO:0004322">
    <property type="term" value="F:ferroxidase activity"/>
    <property type="evidence" value="ECO:0000314"/>
    <property type="project" value="UniProtKB"/>
</dbReference>
<dbReference type="GO" id="GO:0004602">
    <property type="term" value="F:glutathione peroxidase activity"/>
    <property type="evidence" value="ECO:0000314"/>
    <property type="project" value="UniProtKB"/>
</dbReference>
<dbReference type="GO" id="GO:0016491">
    <property type="term" value="F:oxidoreductase activity"/>
    <property type="evidence" value="ECO:0000318"/>
    <property type="project" value="GO_Central"/>
</dbReference>
<dbReference type="GO" id="GO:0016724">
    <property type="term" value="F:oxidoreductase activity, acting on metal ions, oxygen as acceptor"/>
    <property type="evidence" value="ECO:0000314"/>
    <property type="project" value="UniProtKB"/>
</dbReference>
<dbReference type="GO" id="GO:0047066">
    <property type="term" value="F:phospholipid-hydroperoxide glutathione peroxidase activity"/>
    <property type="evidence" value="ECO:0000314"/>
    <property type="project" value="UniProtKB"/>
</dbReference>
<dbReference type="GO" id="GO:0051087">
    <property type="term" value="F:protein-folding chaperone binding"/>
    <property type="evidence" value="ECO:0000353"/>
    <property type="project" value="BHF-UCL"/>
</dbReference>
<dbReference type="GO" id="GO:0006878">
    <property type="term" value="P:intracellular copper ion homeostasis"/>
    <property type="evidence" value="ECO:0000314"/>
    <property type="project" value="UniProtKB"/>
</dbReference>
<dbReference type="GO" id="GO:0006879">
    <property type="term" value="P:intracellular iron ion homeostasis"/>
    <property type="evidence" value="ECO:0000314"/>
    <property type="project" value="UniProtKB"/>
</dbReference>
<dbReference type="CDD" id="cd04222">
    <property type="entry name" value="CuRO_1_ceruloplasmin"/>
    <property type="match status" value="1"/>
</dbReference>
<dbReference type="CDD" id="cd11021">
    <property type="entry name" value="CuRO_2_ceruloplasmin"/>
    <property type="match status" value="1"/>
</dbReference>
<dbReference type="CDD" id="cd04224">
    <property type="entry name" value="CuRO_3_ceruloplasmin"/>
    <property type="match status" value="1"/>
</dbReference>
<dbReference type="CDD" id="cd11022">
    <property type="entry name" value="CuRO_4_ceruloplasmin"/>
    <property type="match status" value="1"/>
</dbReference>
<dbReference type="CDD" id="cd04225">
    <property type="entry name" value="CuRO_5_ceruloplasmin"/>
    <property type="match status" value="1"/>
</dbReference>
<dbReference type="CDD" id="cd11012">
    <property type="entry name" value="CuRO_6_ceruloplasmin"/>
    <property type="match status" value="1"/>
</dbReference>
<dbReference type="FunFam" id="2.60.40.420:FF:000009">
    <property type="entry name" value="Ceruloplasmin"/>
    <property type="match status" value="1"/>
</dbReference>
<dbReference type="FunFam" id="2.60.40.420:FF:000015">
    <property type="entry name" value="Ceruloplasmin"/>
    <property type="match status" value="1"/>
</dbReference>
<dbReference type="FunFam" id="2.60.40.420:FF:000028">
    <property type="entry name" value="Ceruloplasmin"/>
    <property type="match status" value="1"/>
</dbReference>
<dbReference type="FunFam" id="2.60.40.420:FF:000033">
    <property type="entry name" value="Ceruloplasmin"/>
    <property type="match status" value="1"/>
</dbReference>
<dbReference type="FunFam" id="2.60.40.420:FF:000037">
    <property type="entry name" value="Ceruloplasmin"/>
    <property type="match status" value="1"/>
</dbReference>
<dbReference type="Gene3D" id="2.60.40.420">
    <property type="entry name" value="Cupredoxins - blue copper proteins"/>
    <property type="match status" value="5"/>
</dbReference>
<dbReference type="InterPro" id="IPR048236">
    <property type="entry name" value="Ceruloplasmin-like_CuRO_5"/>
</dbReference>
<dbReference type="InterPro" id="IPR011707">
    <property type="entry name" value="Cu-oxidase-like_N"/>
</dbReference>
<dbReference type="InterPro" id="IPR001117">
    <property type="entry name" value="Cu-oxidase_2nd"/>
</dbReference>
<dbReference type="InterPro" id="IPR011706">
    <property type="entry name" value="Cu-oxidase_C"/>
</dbReference>
<dbReference type="InterPro" id="IPR045087">
    <property type="entry name" value="Cu-oxidase_fam"/>
</dbReference>
<dbReference type="InterPro" id="IPR033138">
    <property type="entry name" value="Cu_oxidase_CS"/>
</dbReference>
<dbReference type="InterPro" id="IPR002355">
    <property type="entry name" value="Cu_oxidase_Cu_BS"/>
</dbReference>
<dbReference type="InterPro" id="IPR008972">
    <property type="entry name" value="Cupredoxin"/>
</dbReference>
<dbReference type="PANTHER" id="PTHR11709:SF226">
    <property type="entry name" value="CERULOPLASMIN"/>
    <property type="match status" value="1"/>
</dbReference>
<dbReference type="PANTHER" id="PTHR11709">
    <property type="entry name" value="MULTI-COPPER OXIDASE"/>
    <property type="match status" value="1"/>
</dbReference>
<dbReference type="Pfam" id="PF00394">
    <property type="entry name" value="Cu-oxidase"/>
    <property type="match status" value="1"/>
</dbReference>
<dbReference type="Pfam" id="PF07731">
    <property type="entry name" value="Cu-oxidase_2"/>
    <property type="match status" value="1"/>
</dbReference>
<dbReference type="Pfam" id="PF07732">
    <property type="entry name" value="Cu-oxidase_3"/>
    <property type="match status" value="2"/>
</dbReference>
<dbReference type="SUPFAM" id="SSF49503">
    <property type="entry name" value="Cupredoxins"/>
    <property type="match status" value="6"/>
</dbReference>
<dbReference type="PROSITE" id="PS00079">
    <property type="entry name" value="MULTICOPPER_OXIDASE1"/>
    <property type="match status" value="3"/>
</dbReference>
<dbReference type="PROSITE" id="PS00080">
    <property type="entry name" value="MULTICOPPER_OXIDASE2"/>
    <property type="match status" value="1"/>
</dbReference>
<protein>
    <recommendedName>
        <fullName evidence="24">Ceruloplasmin</fullName>
    </recommendedName>
    <alternativeName>
        <fullName evidence="28">Cuproxidase ceruloplasmin</fullName>
        <ecNumber evidence="4">1.16.3.4</ecNumber>
    </alternativeName>
    <alternativeName>
        <fullName>Ferroxidase ceruloplasmin</fullName>
        <ecNumber evidence="2 8">1.16.3.1</ecNumber>
    </alternativeName>
    <alternativeName>
        <fullName evidence="25">Glutathione peroxidase ceruloplasmin</fullName>
        <ecNumber evidence="2 3">1.11.1.9</ecNumber>
    </alternativeName>
    <alternativeName>
        <fullName evidence="25">Glutathione-dependent peroxiredoxin ceruloplasmin</fullName>
        <ecNumber evidence="2 3">1.11.1.27</ecNumber>
    </alternativeName>
</protein>
<sequence length="1065" mass="122219">MKILILGIFLFLCSTPAWAKEKHYYIGIIETTWDYASDHGEKKLISVDTEHSNIYLQNGPDRIGRLYKKALYLQYTDETFRTTIEKPVWLGFLGPIIKAETGDKVYVHLKNLASRPYTFHSHGITYYKEHEGAIYPDNTTDFQRADDKVYPGEQYTYMLLATEEQSPGEGDGNCVTRIYHSHIDAPKDIASGLIGPLIICKKDSLDKEKEKHIDREFVVMFSVVDENFSWYLEDNIKTYCSEPEKVDKDNEDFQESNRMYSVNGYTFGSLPGLSMCAEDRVKWYLFGMGNEVDVHAAFFHGQALTNKNYRIDTINLFPATLFDAYMVAQNPGEWMLSCQNLNHLKAGLQAFFQVQECNKSSSKDNIRGKHVRHYYIAAEEIIWNYAPSGIDIFTKENLTAPGSDSAVFFEQGTTRIGGSYKKLVYREYTDASFTNRKERGPEEEHLGILGPVIWAEVGDTIRVTFHNKGAYPLSIEPIGVRFNKNNEGTYYSPNYNPQSRSVPPSASHVAPTETFTYEWTVPKEVGPTNADPVCLAKMYYSAVEPTKDIFTGLIGPMKICKKGSLHANGRQKDVDKEFYLFPTVFDENESLLLEDNIRMFTTAPDQVDKEDEDFQESNKMHSMNGFMYGNQPGLTMCKGDSVVWYLFSAGNEADVHGIYFSGNTYLWRGERRDTANLFPQTSLTLHMWPDTEGTFNVECLTTDHYTGGMKQKYTVNQCRRQSEDSTFYLGERTYYIAAVEVEWDYSPQREWEKELHHLQEQNVSNAFLDKGEFYIGSKYKKVVYRQYTDSTFRVPVERKAEEEHLGILGPQLHADVGDKVKIIFKNMATRPYSIHAHGVQTESSTVTPTLPGETLTYVWKIPERSGAGTEDSACIPWAYYSTVDQVKDLYSGLIGPLIVCRRPYLKVFNPRRKLEFALLFLVFDENESWYLDDNIKTYSDHPEKVNKDDEEFIESNKMHAINGRMFGNLQGLTMHVGDEVNWYLMGMGNEIDLHTVHFHGHSFQYKHRGVYSSDVFDIFPGTYQTLEMFPRTPGIWLLHCHVTDHIHAGMETTYTVLQNEDTKSG</sequence>
<gene>
    <name evidence="30" type="primary">CP</name>
</gene>
<name>CERU_HUMAN</name>
<feature type="signal peptide" evidence="21">
    <location>
        <begin position="1"/>
        <end position="19"/>
    </location>
</feature>
<feature type="chain" id="PRO_0000002912" description="Ceruloplasmin">
    <location>
        <begin position="20"/>
        <end position="1065"/>
    </location>
</feature>
<feature type="domain" description="Plastocyanin-like 1" evidence="23 31">
    <location>
        <begin position="20"/>
        <end position="200"/>
    </location>
</feature>
<feature type="domain" description="Plastocyanin-like 2" evidence="23 31">
    <location>
        <begin position="209"/>
        <end position="357"/>
    </location>
</feature>
<feature type="domain" description="Plastocyanin-like 3" evidence="23 31">
    <location>
        <begin position="370"/>
        <end position="560"/>
    </location>
</feature>
<feature type="domain" description="Plastocyanin-like 4" evidence="23 31">
    <location>
        <begin position="570"/>
        <end position="718"/>
    </location>
</feature>
<feature type="domain" description="Plastocyanin-like 5" evidence="23 31">
    <location>
        <begin position="730"/>
        <end position="900"/>
    </location>
</feature>
<feature type="domain" description="Plastocyanin-like 6" evidence="23 31">
    <location>
        <begin position="908"/>
        <end position="1061"/>
    </location>
</feature>
<feature type="active site" description="Nucleophile; for glutathione peroxidase activity" evidence="3">
    <location>
        <position position="699"/>
    </location>
</feature>
<feature type="binding site" evidence="11 15 32 34">
    <location>
        <position position="55"/>
    </location>
    <ligand>
        <name>Na(+)</name>
        <dbReference type="ChEBI" id="CHEBI:29101"/>
        <label>1</label>
    </ligand>
</feature>
<feature type="binding site" evidence="11 15 32 34">
    <location>
        <position position="64"/>
    </location>
    <ligand>
        <name>Na(+)</name>
        <dbReference type="ChEBI" id="CHEBI:29101"/>
        <label>1</label>
    </ligand>
</feature>
<feature type="binding site" evidence="11 15 32 34">
    <location>
        <position position="67"/>
    </location>
    <ligand>
        <name>Na(+)</name>
        <dbReference type="ChEBI" id="CHEBI:29101"/>
        <label>1</label>
    </ligand>
</feature>
<feature type="binding site" description="type 2 copper site" evidence="11 15 23 31 32 33 34">
    <location>
        <position position="120"/>
    </location>
    <ligand>
        <name>Cu(2+)</name>
        <dbReference type="ChEBI" id="CHEBI:29036"/>
        <label>1</label>
    </ligand>
</feature>
<feature type="binding site" evidence="11 15 32 34">
    <location>
        <position position="120"/>
    </location>
    <ligand>
        <name>O2</name>
        <dbReference type="ChEBI" id="CHEBI:15379"/>
    </ligand>
</feature>
<feature type="binding site" description="type 3 copper site" evidence="11 15 23 31 32 33 34">
    <location>
        <position position="122"/>
    </location>
    <ligand>
        <name>Cu(2+)</name>
        <dbReference type="ChEBI" id="CHEBI:29036"/>
        <label>2</label>
    </ligand>
</feature>
<feature type="binding site" evidence="11 15 32 34">
    <location>
        <position position="128"/>
    </location>
    <ligand>
        <name>Ca(2+)</name>
        <dbReference type="ChEBI" id="CHEBI:29108"/>
    </ligand>
</feature>
<feature type="binding site" evidence="11 15 32 34">
    <location>
        <position position="143"/>
    </location>
    <ligand>
        <name>Ca(2+)</name>
        <dbReference type="ChEBI" id="CHEBI:29108"/>
    </ligand>
</feature>
<feature type="binding site" evidence="11 15 32 34">
    <location>
        <position position="146"/>
    </location>
    <ligand>
        <name>Ca(2+)</name>
        <dbReference type="ChEBI" id="CHEBI:29108"/>
    </ligand>
</feature>
<feature type="binding site" evidence="11 15 32 34">
    <location>
        <position position="147"/>
    </location>
    <ligand>
        <name>Ca(2+)</name>
        <dbReference type="ChEBI" id="CHEBI:29108"/>
    </ligand>
</feature>
<feature type="binding site" description="type 3 copper site" evidence="11 15 23 31 32 33 34">
    <location>
        <position position="180"/>
    </location>
    <ligand>
        <name>Cu(2+)</name>
        <dbReference type="ChEBI" id="CHEBI:29036"/>
        <label>2</label>
    </ligand>
</feature>
<feature type="binding site" evidence="11 15 32 34">
    <location>
        <position position="180"/>
    </location>
    <ligand>
        <name>O2</name>
        <dbReference type="ChEBI" id="CHEBI:15379"/>
    </ligand>
</feature>
<feature type="binding site" description="type 3 copper site" evidence="11 15 23 31 32 33 34">
    <location>
        <position position="182"/>
    </location>
    <ligand>
        <name>Cu(2+)</name>
        <dbReference type="ChEBI" id="CHEBI:29036"/>
        <label>3</label>
    </ligand>
</feature>
<feature type="binding site" evidence="11 15 32 34">
    <location>
        <position position="256"/>
    </location>
    <ligand>
        <name>Na(+)</name>
        <dbReference type="ChEBI" id="CHEBI:29101"/>
        <label>1</label>
    </ligand>
</feature>
<feature type="binding site" description="type 1 copper site" evidence="11 15 23 31 32 34">
    <location>
        <position position="295"/>
    </location>
    <ligand>
        <name>Cu(2+)</name>
        <dbReference type="ChEBI" id="CHEBI:29036"/>
        <label>4</label>
    </ligand>
</feature>
<feature type="binding site" description="type 1 copper site" evidence="11 15 23 31 32 34">
    <location>
        <position position="338"/>
    </location>
    <ligand>
        <name>Cu(2+)</name>
        <dbReference type="ChEBI" id="CHEBI:29036"/>
        <label>4</label>
    </ligand>
</feature>
<feature type="binding site" description="type 1 copper site" evidence="11 15 23 31 32 34">
    <location>
        <position position="343"/>
    </location>
    <ligand>
        <name>Cu(2+)</name>
        <dbReference type="ChEBI" id="CHEBI:29036"/>
        <label>4</label>
    </ligand>
</feature>
<feature type="binding site" evidence="11 32">
    <location>
        <position position="408"/>
    </location>
    <ligand>
        <name>Na(+)</name>
        <dbReference type="ChEBI" id="CHEBI:29101"/>
        <label>2</label>
    </ligand>
</feature>
<feature type="binding site" evidence="11 32">
    <location>
        <position position="417"/>
    </location>
    <ligand>
        <name>Na(+)</name>
        <dbReference type="ChEBI" id="CHEBI:29101"/>
        <label>2</label>
    </ligand>
</feature>
<feature type="binding site" evidence="11 32">
    <location>
        <position position="420"/>
    </location>
    <ligand>
        <name>Na(+)</name>
        <dbReference type="ChEBI" id="CHEBI:29101"/>
        <label>2</label>
    </ligand>
</feature>
<feature type="binding site" evidence="11 32">
    <location>
        <position position="617"/>
    </location>
    <ligand>
        <name>Na(+)</name>
        <dbReference type="ChEBI" id="CHEBI:29101"/>
        <label>2</label>
    </ligand>
</feature>
<feature type="binding site" description="type 1 copper site" evidence="11 15 23 31 32 34">
    <location>
        <position position="656"/>
    </location>
    <ligand>
        <name>Cu(2+)</name>
        <dbReference type="ChEBI" id="CHEBI:29036"/>
        <label>5</label>
    </ligand>
</feature>
<feature type="binding site" description="type 1 copper site" evidence="11 15 23 31 32 34">
    <location>
        <position position="699"/>
    </location>
    <ligand>
        <name>Cu(2+)</name>
        <dbReference type="ChEBI" id="CHEBI:29036"/>
        <label>5</label>
    </ligand>
</feature>
<feature type="binding site" description="type 1 copper site" evidence="11 15 23 31 32 34">
    <location>
        <position position="704"/>
    </location>
    <ligand>
        <name>Cu(2+)</name>
        <dbReference type="ChEBI" id="CHEBI:29036"/>
        <label>5</label>
    </ligand>
</feature>
<feature type="binding site" description="type 1 copper site" evidence="11 15 23 31 32 34">
    <location>
        <position position="709"/>
    </location>
    <ligand>
        <name>Cu(2+)</name>
        <dbReference type="ChEBI" id="CHEBI:29036"/>
        <label>5</label>
    </ligand>
</feature>
<feature type="binding site" evidence="11 32">
    <location>
        <position position="767"/>
    </location>
    <ligand>
        <name>Na(+)</name>
        <dbReference type="ChEBI" id="CHEBI:29101"/>
        <label>3</label>
    </ligand>
</feature>
<feature type="binding site" evidence="11 32">
    <location>
        <position position="776"/>
    </location>
    <ligand>
        <name>Na(+)</name>
        <dbReference type="ChEBI" id="CHEBI:29101"/>
        <label>3</label>
    </ligand>
</feature>
<feature type="binding site" evidence="11 32">
    <location>
        <position position="779"/>
    </location>
    <ligand>
        <name>Na(+)</name>
        <dbReference type="ChEBI" id="CHEBI:29101"/>
        <label>3</label>
    </ligand>
</feature>
<feature type="binding site" evidence="11 32">
    <location>
        <position position="955"/>
    </location>
    <ligand>
        <name>Na(+)</name>
        <dbReference type="ChEBI" id="CHEBI:29101"/>
        <label>3</label>
    </ligand>
</feature>
<feature type="binding site" description="type 1 copper site" evidence="11 15 23 31 32 33 34">
    <location>
        <position position="994"/>
    </location>
    <ligand>
        <name>Cu(2+)</name>
        <dbReference type="ChEBI" id="CHEBI:29036"/>
        <label>6</label>
    </ligand>
</feature>
<feature type="binding site" description="type 2 copper site" evidence="11 15 23 31 32 33 34">
    <location>
        <position position="997"/>
    </location>
    <ligand>
        <name>Cu(2+)</name>
        <dbReference type="ChEBI" id="CHEBI:29036"/>
        <label>1</label>
    </ligand>
</feature>
<feature type="binding site" evidence="11 15 32 34">
    <location>
        <position position="997"/>
    </location>
    <ligand>
        <name>O2</name>
        <dbReference type="ChEBI" id="CHEBI:15379"/>
    </ligand>
</feature>
<feature type="binding site" description="type 3 copper site" evidence="11 15 23 31 32 33 34">
    <location>
        <position position="999"/>
    </location>
    <ligand>
        <name>Cu(2+)</name>
        <dbReference type="ChEBI" id="CHEBI:29036"/>
        <label>3</label>
    </ligand>
</feature>
<feature type="binding site" evidence="15 34">
    <location>
        <position position="999"/>
    </location>
    <ligand>
        <name>O2</name>
        <dbReference type="ChEBI" id="CHEBI:15379"/>
    </ligand>
</feature>
<feature type="binding site" description="type 3 copper site" evidence="11 15 23 31 32 33 34">
    <location>
        <position position="1039"/>
    </location>
    <ligand>
        <name>Cu(2+)</name>
        <dbReference type="ChEBI" id="CHEBI:29036"/>
        <label>3</label>
    </ligand>
</feature>
<feature type="binding site" description="type 1 copper site" evidence="11 15 23 31 32 33 34">
    <location>
        <position position="1040"/>
    </location>
    <ligand>
        <name>Cu(2+)</name>
        <dbReference type="ChEBI" id="CHEBI:29036"/>
        <label>6</label>
    </ligand>
</feature>
<feature type="binding site" description="type 3 copper site" evidence="11 15 23 31 32 33 34">
    <location>
        <position position="1041"/>
    </location>
    <ligand>
        <name>Cu(2+)</name>
        <dbReference type="ChEBI" id="CHEBI:29036"/>
        <label>2</label>
    </ligand>
</feature>
<feature type="binding site" evidence="11 15 32 34">
    <location>
        <position position="1041"/>
    </location>
    <ligand>
        <name>O2</name>
        <dbReference type="ChEBI" id="CHEBI:15379"/>
    </ligand>
</feature>
<feature type="binding site" description="type 1 copper site" evidence="11 15 23 31 32 34">
    <location>
        <position position="1045"/>
    </location>
    <ligand>
        <name>Cu(2+)</name>
        <dbReference type="ChEBI" id="CHEBI:29036"/>
        <label>6</label>
    </ligand>
</feature>
<feature type="binding site" description="type 1 copper site" evidence="11 15 23 31 32 34">
    <location>
        <position position="1050"/>
    </location>
    <ligand>
        <name>Cu(2+)</name>
        <dbReference type="ChEBI" id="CHEBI:29036"/>
        <label>6</label>
    </ligand>
</feature>
<feature type="modified residue" description="Phosphoserine; by FAM20C" evidence="16">
    <location>
        <position position="722"/>
    </location>
</feature>
<feature type="glycosylation site" description="N-linked (GlcNAc...) (complex) asparagine" evidence="5 6 9 11 12 13 14 15 23 31 32 33 34">
    <location>
        <position position="138"/>
    </location>
</feature>
<feature type="glycosylation site" description="N-linked (GlcNAc...) (complex) asparagine" evidence="9 12 13 14">
    <location>
        <position position="358"/>
    </location>
</feature>
<feature type="glycosylation site" description="N-linked (GlcNAc...) (complex) asparagine" evidence="5 9 11 12 13 14 15 32 33 34">
    <location>
        <position position="397"/>
    </location>
</feature>
<feature type="glycosylation site" description="N-linked (GlcNAc...) asparagine" evidence="9">
    <location>
        <position position="588"/>
    </location>
</feature>
<feature type="glycosylation site" description="N-linked (GlcNAc...) (complex) asparagine" evidence="5 9 12 13 23 31">
    <location>
        <position position="762"/>
    </location>
</feature>
<feature type="glycosylation site" description="N-linked (GlcNAc...) asparagine" evidence="9">
    <location>
        <position position="926"/>
    </location>
</feature>
<feature type="disulfide bond" evidence="11 23 31 32">
    <location>
        <begin position="174"/>
        <end position="200"/>
    </location>
</feature>
<feature type="disulfide bond" evidence="11 23 31 32">
    <location>
        <begin position="276"/>
        <end position="357"/>
    </location>
</feature>
<feature type="disulfide bond" evidence="11 23 31 32">
    <location>
        <begin position="534"/>
        <end position="560"/>
    </location>
</feature>
<feature type="disulfide bond" evidence="11 23 31 32">
    <location>
        <begin position="637"/>
        <end position="718"/>
    </location>
</feature>
<feature type="disulfide bond" evidence="11 23 31 32">
    <location>
        <begin position="874"/>
        <end position="900"/>
    </location>
</feature>
<feature type="sequence variant" id="VAR_025655" description="Retained in the endoplasmic reticulum; dbSNP:rs759185877." evidence="7 8">
    <original>I</original>
    <variation>T</variation>
    <location>
        <position position="63"/>
    </location>
</feature>
<feature type="sequence variant" id="VAR_032815" description="In dbSNP:rs34624984.">
    <original>R</original>
    <variation>C</variation>
    <location>
        <position position="367"/>
    </location>
</feature>
<feature type="sequence variant" id="VAR_025656" description="In dbSNP:rs35331711." evidence="7">
    <original>P</original>
    <variation>L</variation>
    <location>
        <position position="477"/>
    </location>
</feature>
<feature type="sequence variant" id="VAR_025657" description="No effect on the localization at the plasma membrane; dbSNP:rs701753." evidence="7 8 17">
    <original>E</original>
    <variation>D</variation>
    <location>
        <position position="544"/>
    </location>
</feature>
<feature type="sequence variant" id="VAR_025658" description="In dbSNP:rs61733458." evidence="7">
    <original>T</original>
    <variation>I</variation>
    <location>
        <position position="551"/>
    </location>
</feature>
<feature type="sequence variant" id="VAR_025659" description="No effect on the localization at the plasma membrane; dbSNP:rs115552500." evidence="7 8">
    <original>R</original>
    <variation>H</variation>
    <location>
        <position position="793"/>
    </location>
</feature>
<feature type="sequence variant" id="VAR_025660" description="In dbSNP:rs56033670." evidence="7">
    <original>T</original>
    <variation>R</variation>
    <location>
        <position position="841"/>
    </location>
</feature>
<feature type="sequence conflict" description="In Ref. 6; AAA51975." evidence="24" ref="6">
    <original>E</original>
    <variation>EGEYP</variation>
    <location>
        <position position="1060"/>
    </location>
</feature>
<feature type="strand" evidence="37">
    <location>
        <begin position="21"/>
        <end position="36"/>
    </location>
</feature>
<feature type="turn" evidence="37">
    <location>
        <begin position="49"/>
        <end position="52"/>
    </location>
</feature>
<feature type="helix" evidence="37">
    <location>
        <begin position="53"/>
        <end position="56"/>
    </location>
</feature>
<feature type="strand" evidence="35">
    <location>
        <begin position="58"/>
        <end position="61"/>
    </location>
</feature>
<feature type="strand" evidence="37">
    <location>
        <begin position="65"/>
        <end position="79"/>
    </location>
</feature>
<feature type="strand" evidence="35">
    <location>
        <begin position="82"/>
        <end position="84"/>
    </location>
</feature>
<feature type="helix" evidence="37">
    <location>
        <begin position="88"/>
        <end position="90"/>
    </location>
</feature>
<feature type="strand" evidence="37">
    <location>
        <begin position="97"/>
        <end position="100"/>
    </location>
</feature>
<feature type="strand" evidence="37">
    <location>
        <begin position="104"/>
        <end position="111"/>
    </location>
</feature>
<feature type="strand" evidence="37">
    <location>
        <begin position="113"/>
        <end position="115"/>
    </location>
</feature>
<feature type="strand" evidence="37">
    <location>
        <begin position="120"/>
        <end position="125"/>
    </location>
</feature>
<feature type="helix" evidence="37">
    <location>
        <begin position="128"/>
        <end position="130"/>
    </location>
</feature>
<feature type="helix" evidence="37">
    <location>
        <begin position="141"/>
        <end position="144"/>
    </location>
</feature>
<feature type="helix" evidence="37">
    <location>
        <begin position="145"/>
        <end position="147"/>
    </location>
</feature>
<feature type="strand" evidence="37">
    <location>
        <begin position="154"/>
        <end position="160"/>
    </location>
</feature>
<feature type="strand" evidence="37">
    <location>
        <begin position="173"/>
        <end position="180"/>
    </location>
</feature>
<feature type="helix" evidence="37">
    <location>
        <begin position="185"/>
        <end position="190"/>
    </location>
</feature>
<feature type="strand" evidence="37">
    <location>
        <begin position="194"/>
        <end position="200"/>
    </location>
</feature>
<feature type="strand" evidence="36">
    <location>
        <begin position="205"/>
        <end position="210"/>
    </location>
</feature>
<feature type="strand" evidence="37">
    <location>
        <begin position="214"/>
        <end position="225"/>
    </location>
</feature>
<feature type="helix" evidence="37">
    <location>
        <begin position="226"/>
        <end position="228"/>
    </location>
</feature>
<feature type="helix" evidence="37">
    <location>
        <begin position="232"/>
        <end position="239"/>
    </location>
</feature>
<feature type="helix" evidence="37">
    <location>
        <begin position="243"/>
        <end position="245"/>
    </location>
</feature>
<feature type="helix" evidence="37">
    <location>
        <begin position="251"/>
        <end position="257"/>
    </location>
</feature>
<feature type="strand" evidence="37">
    <location>
        <begin position="258"/>
        <end position="262"/>
    </location>
</feature>
<feature type="strand" evidence="37">
    <location>
        <begin position="274"/>
        <end position="276"/>
    </location>
</feature>
<feature type="strand" evidence="37">
    <location>
        <begin position="280"/>
        <end position="287"/>
    </location>
</feature>
<feature type="strand" evidence="37">
    <location>
        <begin position="295"/>
        <end position="301"/>
    </location>
</feature>
<feature type="strand" evidence="37">
    <location>
        <begin position="304"/>
        <end position="306"/>
    </location>
</feature>
<feature type="strand" evidence="37">
    <location>
        <begin position="309"/>
        <end position="312"/>
    </location>
</feature>
<feature type="strand" evidence="37">
    <location>
        <begin position="321"/>
        <end position="327"/>
    </location>
</feature>
<feature type="strand" evidence="37">
    <location>
        <begin position="332"/>
        <end position="338"/>
    </location>
</feature>
<feature type="helix" evidence="37">
    <location>
        <begin position="341"/>
        <end position="344"/>
    </location>
</feature>
<feature type="turn" evidence="37">
    <location>
        <begin position="345"/>
        <end position="347"/>
    </location>
</feature>
<feature type="strand" evidence="37">
    <location>
        <begin position="349"/>
        <end position="355"/>
    </location>
</feature>
<feature type="strand" evidence="37">
    <location>
        <begin position="367"/>
        <end position="385"/>
    </location>
</feature>
<feature type="turn" evidence="37">
    <location>
        <begin position="392"/>
        <end position="394"/>
    </location>
</feature>
<feature type="strand" evidence="35">
    <location>
        <begin position="401"/>
        <end position="403"/>
    </location>
</feature>
<feature type="helix" evidence="37">
    <location>
        <begin position="406"/>
        <end position="409"/>
    </location>
</feature>
<feature type="strand" evidence="35">
    <location>
        <begin position="412"/>
        <end position="414"/>
    </location>
</feature>
<feature type="strand" evidence="37">
    <location>
        <begin position="418"/>
        <end position="427"/>
    </location>
</feature>
<feature type="strand" evidence="37">
    <location>
        <begin position="429"/>
        <end position="435"/>
    </location>
</feature>
<feature type="helix" evidence="37">
    <location>
        <begin position="444"/>
        <end position="446"/>
    </location>
</feature>
<feature type="strand" evidence="37">
    <location>
        <begin position="453"/>
        <end position="456"/>
    </location>
</feature>
<feature type="strand" evidence="37">
    <location>
        <begin position="459"/>
        <end position="471"/>
    </location>
</feature>
<feature type="strand" evidence="37">
    <location>
        <begin position="476"/>
        <end position="481"/>
    </location>
</feature>
<feature type="helix" evidence="37">
    <location>
        <begin position="484"/>
        <end position="486"/>
    </location>
</feature>
<feature type="strand" evidence="37">
    <location>
        <begin position="514"/>
        <end position="520"/>
    </location>
</feature>
<feature type="turn" evidence="37">
    <location>
        <begin position="523"/>
        <end position="525"/>
    </location>
</feature>
<feature type="strand" evidence="36">
    <location>
        <begin position="529"/>
        <end position="531"/>
    </location>
</feature>
<feature type="strand" evidence="37">
    <location>
        <begin position="533"/>
        <end position="540"/>
    </location>
</feature>
<feature type="strand" evidence="36">
    <location>
        <begin position="542"/>
        <end position="544"/>
    </location>
</feature>
<feature type="helix" evidence="37">
    <location>
        <begin position="545"/>
        <end position="551"/>
    </location>
</feature>
<feature type="strand" evidence="37">
    <location>
        <begin position="554"/>
        <end position="560"/>
    </location>
</feature>
<feature type="strand" evidence="37">
    <location>
        <begin position="575"/>
        <end position="580"/>
    </location>
</feature>
<feature type="strand" evidence="37">
    <location>
        <begin position="582"/>
        <end position="586"/>
    </location>
</feature>
<feature type="helix" evidence="37">
    <location>
        <begin position="587"/>
        <end position="589"/>
    </location>
</feature>
<feature type="helix" evidence="37">
    <location>
        <begin position="593"/>
        <end position="600"/>
    </location>
</feature>
<feature type="helix" evidence="37">
    <location>
        <begin position="604"/>
        <end position="606"/>
    </location>
</feature>
<feature type="helix" evidence="37">
    <location>
        <begin position="612"/>
        <end position="617"/>
    </location>
</feature>
<feature type="strand" evidence="37">
    <location>
        <begin position="619"/>
        <end position="623"/>
    </location>
</feature>
<feature type="strand" evidence="37">
    <location>
        <begin position="635"/>
        <end position="637"/>
    </location>
</feature>
<feature type="strand" evidence="37">
    <location>
        <begin position="642"/>
        <end position="647"/>
    </location>
</feature>
<feature type="strand" evidence="37">
    <location>
        <begin position="656"/>
        <end position="660"/>
    </location>
</feature>
<feature type="strand" evidence="37">
    <location>
        <begin position="665"/>
        <end position="667"/>
    </location>
</feature>
<feature type="strand" evidence="37">
    <location>
        <begin position="670"/>
        <end position="677"/>
    </location>
</feature>
<feature type="strand" evidence="37">
    <location>
        <begin position="682"/>
        <end position="687"/>
    </location>
</feature>
<feature type="strand" evidence="37">
    <location>
        <begin position="693"/>
        <end position="699"/>
    </location>
</feature>
<feature type="helix" evidence="37">
    <location>
        <begin position="702"/>
        <end position="706"/>
    </location>
</feature>
<feature type="strand" evidence="37">
    <location>
        <begin position="710"/>
        <end position="716"/>
    </location>
</feature>
<feature type="strand" evidence="37">
    <location>
        <begin position="729"/>
        <end position="745"/>
    </location>
</feature>
<feature type="helix" evidence="37">
    <location>
        <begin position="750"/>
        <end position="759"/>
    </location>
</feature>
<feature type="turn" evidence="37">
    <location>
        <begin position="766"/>
        <end position="768"/>
    </location>
</feature>
<feature type="turn" evidence="37">
    <location>
        <begin position="771"/>
        <end position="773"/>
    </location>
</feature>
<feature type="strand" evidence="37">
    <location>
        <begin position="777"/>
        <end position="789"/>
    </location>
</feature>
<feature type="helix" evidence="37">
    <location>
        <begin position="800"/>
        <end position="805"/>
    </location>
</feature>
<feature type="strand" evidence="37">
    <location>
        <begin position="812"/>
        <end position="815"/>
    </location>
</feature>
<feature type="strand" evidence="37">
    <location>
        <begin position="818"/>
        <end position="826"/>
    </location>
</feature>
<feature type="strand" evidence="37">
    <location>
        <begin position="828"/>
        <end position="830"/>
    </location>
</feature>
<feature type="strand" evidence="37">
    <location>
        <begin position="835"/>
        <end position="838"/>
    </location>
</feature>
<feature type="strand" evidence="35">
    <location>
        <begin position="842"/>
        <end position="844"/>
    </location>
</feature>
<feature type="strand" evidence="37">
    <location>
        <begin position="854"/>
        <end position="860"/>
    </location>
</feature>
<feature type="helix" evidence="37">
    <location>
        <begin position="863"/>
        <end position="865"/>
    </location>
</feature>
<feature type="strand" evidence="35">
    <location>
        <begin position="869"/>
        <end position="871"/>
    </location>
</feature>
<feature type="strand" evidence="37">
    <location>
        <begin position="873"/>
        <end position="880"/>
    </location>
</feature>
<feature type="helix" evidence="37">
    <location>
        <begin position="885"/>
        <end position="890"/>
    </location>
</feature>
<feature type="strand" evidence="37">
    <location>
        <begin position="894"/>
        <end position="900"/>
    </location>
</feature>
<feature type="strand" evidence="37">
    <location>
        <begin position="913"/>
        <end position="924"/>
    </location>
</feature>
<feature type="helix" evidence="37">
    <location>
        <begin position="925"/>
        <end position="927"/>
    </location>
</feature>
<feature type="helix" evidence="37">
    <location>
        <begin position="931"/>
        <end position="938"/>
    </location>
</feature>
<feature type="helix" evidence="37">
    <location>
        <begin position="942"/>
        <end position="944"/>
    </location>
</feature>
<feature type="helix" evidence="37">
    <location>
        <begin position="950"/>
        <end position="955"/>
    </location>
</feature>
<feature type="strand" evidence="37">
    <location>
        <begin position="957"/>
        <end position="961"/>
    </location>
</feature>
<feature type="strand" evidence="37">
    <location>
        <begin position="973"/>
        <end position="975"/>
    </location>
</feature>
<feature type="strand" evidence="37">
    <location>
        <begin position="979"/>
        <end position="986"/>
    </location>
</feature>
<feature type="strand" evidence="37">
    <location>
        <begin position="994"/>
        <end position="998"/>
    </location>
</feature>
<feature type="strand" evidence="37">
    <location>
        <begin position="1003"/>
        <end position="1006"/>
    </location>
</feature>
<feature type="helix" evidence="37">
    <location>
        <begin position="1007"/>
        <end position="1009"/>
    </location>
</feature>
<feature type="strand" evidence="37">
    <location>
        <begin position="1011"/>
        <end position="1018"/>
    </location>
</feature>
<feature type="strand" evidence="37">
    <location>
        <begin position="1023"/>
        <end position="1028"/>
    </location>
</feature>
<feature type="strand" evidence="37">
    <location>
        <begin position="1034"/>
        <end position="1040"/>
    </location>
</feature>
<feature type="helix" evidence="37">
    <location>
        <begin position="1043"/>
        <end position="1047"/>
    </location>
</feature>
<feature type="strand" evidence="37">
    <location>
        <begin position="1051"/>
        <end position="1057"/>
    </location>
</feature>
<proteinExistence type="evidence at protein level"/>
<accession>P00450</accession>
<accession>Q14063</accession>
<accession>Q2PP18</accession>
<accession>Q9UKS4</accession>
<evidence type="ECO:0000250" key="1">
    <source>
        <dbReference type="UniProtKB" id="P13635"/>
    </source>
</evidence>
<evidence type="ECO:0000269" key="2">
    <source>
    </source>
</evidence>
<evidence type="ECO:0000269" key="3">
    <source>
    </source>
</evidence>
<evidence type="ECO:0000269" key="4">
    <source>
    </source>
</evidence>
<evidence type="ECO:0000269" key="5">
    <source>
    </source>
</evidence>
<evidence type="ECO:0000269" key="6">
    <source>
    </source>
</evidence>
<evidence type="ECO:0000269" key="7">
    <source>
    </source>
</evidence>
<evidence type="ECO:0000269" key="8">
    <source>
    </source>
</evidence>
<evidence type="ECO:0000269" key="9">
    <source>
    </source>
</evidence>
<evidence type="ECO:0000269" key="10">
    <source>
    </source>
</evidence>
<evidence type="ECO:0000269" key="11">
    <source>
    </source>
</evidence>
<evidence type="ECO:0000269" key="12">
    <source>
    </source>
</evidence>
<evidence type="ECO:0000269" key="13">
    <source>
    </source>
</evidence>
<evidence type="ECO:0000269" key="14">
    <source>
    </source>
</evidence>
<evidence type="ECO:0000269" key="15">
    <source>
    </source>
</evidence>
<evidence type="ECO:0000269" key="16">
    <source>
    </source>
</evidence>
<evidence type="ECO:0000269" key="17">
    <source>
    </source>
</evidence>
<evidence type="ECO:0000269" key="18">
    <source>
    </source>
</evidence>
<evidence type="ECO:0000269" key="19">
    <source>
    </source>
</evidence>
<evidence type="ECO:0000269" key="20">
    <source>
    </source>
</evidence>
<evidence type="ECO:0000269" key="21">
    <source>
    </source>
</evidence>
<evidence type="ECO:0000269" key="22">
    <source>
    </source>
</evidence>
<evidence type="ECO:0000269" key="23">
    <source ref="29"/>
</evidence>
<evidence type="ECO:0000305" key="24"/>
<evidence type="ECO:0000305" key="25">
    <source>
    </source>
</evidence>
<evidence type="ECO:0000305" key="26">
    <source>
    </source>
</evidence>
<evidence type="ECO:0000305" key="27">
    <source>
    </source>
</evidence>
<evidence type="ECO:0000305" key="28">
    <source>
    </source>
</evidence>
<evidence type="ECO:0000305" key="29">
    <source>
    </source>
</evidence>
<evidence type="ECO:0000312" key="30">
    <source>
        <dbReference type="HGNC" id="HGNC:2295"/>
    </source>
</evidence>
<evidence type="ECO:0007744" key="31">
    <source>
        <dbReference type="PDB" id="1KCW"/>
    </source>
</evidence>
<evidence type="ECO:0007744" key="32">
    <source>
        <dbReference type="PDB" id="2J5W"/>
    </source>
</evidence>
<evidence type="ECO:0007744" key="33">
    <source>
        <dbReference type="PDB" id="4EJX"/>
    </source>
</evidence>
<evidence type="ECO:0007744" key="34">
    <source>
        <dbReference type="PDB" id="4ENZ"/>
    </source>
</evidence>
<evidence type="ECO:0007829" key="35">
    <source>
        <dbReference type="PDB" id="1KCW"/>
    </source>
</evidence>
<evidence type="ECO:0007829" key="36">
    <source>
        <dbReference type="PDB" id="2J5W"/>
    </source>
</evidence>
<evidence type="ECO:0007829" key="37">
    <source>
        <dbReference type="PDB" id="4ENZ"/>
    </source>
</evidence>
<organism>
    <name type="scientific">Homo sapiens</name>
    <name type="common">Human</name>
    <dbReference type="NCBI Taxonomy" id="9606"/>
    <lineage>
        <taxon>Eukaryota</taxon>
        <taxon>Metazoa</taxon>
        <taxon>Chordata</taxon>
        <taxon>Craniata</taxon>
        <taxon>Vertebrata</taxon>
        <taxon>Euteleostomi</taxon>
        <taxon>Mammalia</taxon>
        <taxon>Eutheria</taxon>
        <taxon>Euarchontoglires</taxon>
        <taxon>Primates</taxon>
        <taxon>Haplorrhini</taxon>
        <taxon>Catarrhini</taxon>
        <taxon>Hominidae</taxon>
        <taxon>Homo</taxon>
    </lineage>
</organism>